<keyword id="KW-0021">Allosteric enzyme</keyword>
<keyword id="KW-0035">Amyloplast</keyword>
<keyword id="KW-0067">ATP-binding</keyword>
<keyword id="KW-0150">Chloroplast</keyword>
<keyword id="KW-0547">Nucleotide-binding</keyword>
<keyword id="KW-0548">Nucleotidyltransferase</keyword>
<keyword id="KW-0934">Plastid</keyword>
<keyword id="KW-1185">Reference proteome</keyword>
<keyword id="KW-0750">Starch biosynthesis</keyword>
<keyword id="KW-0808">Transferase</keyword>
<keyword id="KW-0809">Transit peptide</keyword>
<reference key="1">
    <citation type="journal article" date="1995" name="Planta">
        <title>Adenosine diphosphate glucose pyrophosphorylase genes in wheat: differential expression and gene mapping.</title>
        <authorList>
            <person name="Ainsworth C."/>
            <person name="Hosein F."/>
            <person name="Tarvis M."/>
            <person name="Weir F."/>
            <person name="Burrell M."/>
            <person name="Devos K.M."/>
            <person name="Gale M.D."/>
        </authorList>
    </citation>
    <scope>NUCLEOTIDE SEQUENCE [GENOMIC DNA]</scope>
    <source>
        <strain>cv. Chinese Spring</strain>
    </source>
</reference>
<reference key="2">
    <citation type="journal article" date="1989" name="Plant Mol. Biol.">
        <title>Isolation and nucleotide sequences of cDNA clones encoding ADP-glucose pyrophosphorylase polypeptides from wheat leaf and endosperm.</title>
        <authorList>
            <person name="Olive M.R."/>
            <person name="Ellis R.J."/>
            <person name="Schuch W.W."/>
        </authorList>
    </citation>
    <scope>NUCLEOTIDE SEQUENCE [MRNA] OF 227-522</scope>
    <source>
        <strain>cv. Mardler</strain>
        <tissue>Endosperm</tissue>
    </source>
</reference>
<protein>
    <recommendedName>
        <fullName>Glucose-1-phosphate adenylyltransferase large subunit, chloroplastic/amyloplastic</fullName>
        <ecNumber>2.7.7.27</ecNumber>
    </recommendedName>
    <alternativeName>
        <fullName>ADP-glucose pyrophosphorylase</fullName>
    </alternativeName>
    <alternativeName>
        <fullName>ADP-glucose synthase</fullName>
    </alternativeName>
    <alternativeName>
        <fullName>AGPase S</fullName>
    </alternativeName>
    <alternativeName>
        <fullName>Alpha-D-glucose-1-phosphate adenyl transferase</fullName>
    </alternativeName>
</protein>
<organism>
    <name type="scientific">Triticum aestivum</name>
    <name type="common">Wheat</name>
    <dbReference type="NCBI Taxonomy" id="4565"/>
    <lineage>
        <taxon>Eukaryota</taxon>
        <taxon>Viridiplantae</taxon>
        <taxon>Streptophyta</taxon>
        <taxon>Embryophyta</taxon>
        <taxon>Tracheophyta</taxon>
        <taxon>Spermatophyta</taxon>
        <taxon>Magnoliopsida</taxon>
        <taxon>Liliopsida</taxon>
        <taxon>Poales</taxon>
        <taxon>Poaceae</taxon>
        <taxon>BOP clade</taxon>
        <taxon>Pooideae</taxon>
        <taxon>Triticodae</taxon>
        <taxon>Triticeae</taxon>
        <taxon>Triticinae</taxon>
        <taxon>Triticum</taxon>
    </lineage>
</organism>
<name>GLGL2_WHEAT</name>
<proteinExistence type="evidence at transcript level"/>
<dbReference type="EC" id="2.7.7.27"/>
<dbReference type="EMBL" id="Z21969">
    <property type="protein sequence ID" value="CAA79980.1"/>
    <property type="molecule type" value="Genomic_DNA"/>
</dbReference>
<dbReference type="EMBL" id="X14349">
    <property type="protein sequence ID" value="CAA32532.1"/>
    <property type="molecule type" value="mRNA"/>
</dbReference>
<dbReference type="PIR" id="S05078">
    <property type="entry name" value="S05078"/>
</dbReference>
<dbReference type="PIR" id="S60572">
    <property type="entry name" value="S60572"/>
</dbReference>
<dbReference type="SMR" id="P12299"/>
<dbReference type="STRING" id="4565.P12299"/>
<dbReference type="PaxDb" id="4565-Traes_1DL_844FE40E6.1"/>
<dbReference type="EnsemblPlants" id="TraesCAD_scaffold_026862_01G000200.1">
    <property type="protein sequence ID" value="TraesCAD_scaffold_026862_01G000200.1"/>
    <property type="gene ID" value="TraesCAD_scaffold_026862_01G000200"/>
</dbReference>
<dbReference type="EnsemblPlants" id="TraesCLE_scaffold_021123_01G000200.1">
    <property type="protein sequence ID" value="TraesCLE_scaffold_021123_01G000200.1"/>
    <property type="gene ID" value="TraesCLE_scaffold_021123_01G000200"/>
</dbReference>
<dbReference type="EnsemblPlants" id="TraesCS1D02G427400.1">
    <property type="protein sequence ID" value="TraesCS1D02G427400.1"/>
    <property type="gene ID" value="TraesCS1D02G427400"/>
</dbReference>
<dbReference type="EnsemblPlants" id="TraesCS1D03G0983500.1">
    <property type="protein sequence ID" value="TraesCS1D03G0983500.1.CDS"/>
    <property type="gene ID" value="TraesCS1D03G0983500"/>
</dbReference>
<dbReference type="EnsemblPlants" id="TraesJUL1D03G00571680.1">
    <property type="protein sequence ID" value="TraesJUL1D03G00571680.1"/>
    <property type="gene ID" value="TraesJUL1D03G00571680"/>
</dbReference>
<dbReference type="EnsemblPlants" id="TraesKAR1D01G0348590.1">
    <property type="protein sequence ID" value="cds.TraesKAR1D01G0348590.1"/>
    <property type="gene ID" value="TraesKAR1D01G0348590"/>
</dbReference>
<dbReference type="EnsemblPlants" id="TraesPARA_EIv1.0_0323440.2">
    <property type="protein sequence ID" value="TraesPARA_EIv1.0_0323440.2.CDS"/>
    <property type="gene ID" value="TraesPARA_EIv1.0_0323440"/>
</dbReference>
<dbReference type="EnsemblPlants" id="TraesRN1D0101041400.1">
    <property type="protein sequence ID" value="TraesRN1D0101041400.1"/>
    <property type="gene ID" value="TraesRN1D0101041400"/>
</dbReference>
<dbReference type="EnsemblPlants" id="TraesROB_scaffold_095547_01G000200.1">
    <property type="protein sequence ID" value="TraesROB_scaffold_095547_01G000200.1"/>
    <property type="gene ID" value="TraesROB_scaffold_095547_01G000200"/>
</dbReference>
<dbReference type="EnsemblPlants" id="TraesSYM1D03G00576080.4">
    <property type="protein sequence ID" value="TraesSYM1D03G00576080.4"/>
    <property type="gene ID" value="TraesSYM1D03G00576080"/>
</dbReference>
<dbReference type="EnsemblPlants" id="TraesWEE_scaffold_083408_01G000100.1">
    <property type="protein sequence ID" value="TraesWEE_scaffold_083408_01G000100.1"/>
    <property type="gene ID" value="TraesWEE_scaffold_083408_01G000100"/>
</dbReference>
<dbReference type="Gramene" id="TraesCAD_scaffold_026862_01G000200.1">
    <property type="protein sequence ID" value="TraesCAD_scaffold_026862_01G000200.1"/>
    <property type="gene ID" value="TraesCAD_scaffold_026862_01G000200"/>
</dbReference>
<dbReference type="Gramene" id="TraesCLE_scaffold_021123_01G000200.1">
    <property type="protein sequence ID" value="TraesCLE_scaffold_021123_01G000200.1"/>
    <property type="gene ID" value="TraesCLE_scaffold_021123_01G000200"/>
</dbReference>
<dbReference type="Gramene" id="TraesCS1D02G427400.1">
    <property type="protein sequence ID" value="TraesCS1D02G427400.1"/>
    <property type="gene ID" value="TraesCS1D02G427400"/>
</dbReference>
<dbReference type="Gramene" id="TraesCS1D03G0983500.1">
    <property type="protein sequence ID" value="TraesCS1D03G0983500.1.CDS"/>
    <property type="gene ID" value="TraesCS1D03G0983500"/>
</dbReference>
<dbReference type="Gramene" id="TraesJUL1D03G00571680.1">
    <property type="protein sequence ID" value="TraesJUL1D03G00571680.1"/>
    <property type="gene ID" value="TraesJUL1D03G00571680"/>
</dbReference>
<dbReference type="Gramene" id="TraesKAR1D01G0348590.1">
    <property type="protein sequence ID" value="cds.TraesKAR1D01G0348590.1"/>
    <property type="gene ID" value="TraesKAR1D01G0348590"/>
</dbReference>
<dbReference type="Gramene" id="TraesPARA_EIv1.0_0323440.2">
    <property type="protein sequence ID" value="TraesPARA_EIv1.0_0323440.2.CDS"/>
    <property type="gene ID" value="TraesPARA_EIv1.0_0323440"/>
</dbReference>
<dbReference type="Gramene" id="TraesRN1D0101041400.1">
    <property type="protein sequence ID" value="TraesRN1D0101041400.1"/>
    <property type="gene ID" value="TraesRN1D0101041400"/>
</dbReference>
<dbReference type="Gramene" id="TraesROB_scaffold_095547_01G000200.1">
    <property type="protein sequence ID" value="TraesROB_scaffold_095547_01G000200.1"/>
    <property type="gene ID" value="TraesROB_scaffold_095547_01G000200"/>
</dbReference>
<dbReference type="Gramene" id="TraesSYM1D03G00576080.4">
    <property type="protein sequence ID" value="TraesSYM1D03G00576080.4"/>
    <property type="gene ID" value="TraesSYM1D03G00576080"/>
</dbReference>
<dbReference type="Gramene" id="TraesWEE_scaffold_083408_01G000100.1">
    <property type="protein sequence ID" value="TraesWEE_scaffold_083408_01G000100.1"/>
    <property type="gene ID" value="TraesWEE_scaffold_083408_01G000100"/>
</dbReference>
<dbReference type="eggNOG" id="KOG1322">
    <property type="taxonomic scope" value="Eukaryota"/>
</dbReference>
<dbReference type="HOGENOM" id="CLU_029499_14_4_1"/>
<dbReference type="OMA" id="WGERISW"/>
<dbReference type="SABIO-RK" id="P12299"/>
<dbReference type="UniPathway" id="UPA00152"/>
<dbReference type="Proteomes" id="UP000019116">
    <property type="component" value="Chromosome 1D"/>
</dbReference>
<dbReference type="ExpressionAtlas" id="P12299">
    <property type="expression patterns" value="baseline and differential"/>
</dbReference>
<dbReference type="GO" id="GO:0009501">
    <property type="term" value="C:amyloplast"/>
    <property type="evidence" value="ECO:0007669"/>
    <property type="project" value="UniProtKB-SubCell"/>
</dbReference>
<dbReference type="GO" id="GO:0009507">
    <property type="term" value="C:chloroplast"/>
    <property type="evidence" value="ECO:0007669"/>
    <property type="project" value="UniProtKB-SubCell"/>
</dbReference>
<dbReference type="GO" id="GO:0005524">
    <property type="term" value="F:ATP binding"/>
    <property type="evidence" value="ECO:0007669"/>
    <property type="project" value="UniProtKB-KW"/>
</dbReference>
<dbReference type="GO" id="GO:0008878">
    <property type="term" value="F:glucose-1-phosphate adenylyltransferase activity"/>
    <property type="evidence" value="ECO:0007669"/>
    <property type="project" value="UniProtKB-EC"/>
</dbReference>
<dbReference type="GO" id="GO:0005978">
    <property type="term" value="P:glycogen biosynthetic process"/>
    <property type="evidence" value="ECO:0007669"/>
    <property type="project" value="InterPro"/>
</dbReference>
<dbReference type="GO" id="GO:0019252">
    <property type="term" value="P:starch biosynthetic process"/>
    <property type="evidence" value="ECO:0007669"/>
    <property type="project" value="UniProtKB-UniPathway"/>
</dbReference>
<dbReference type="CDD" id="cd02508">
    <property type="entry name" value="ADP_Glucose_PP"/>
    <property type="match status" value="1"/>
</dbReference>
<dbReference type="CDD" id="cd04651">
    <property type="entry name" value="LbH_G1P_AT_C"/>
    <property type="match status" value="1"/>
</dbReference>
<dbReference type="FunFam" id="3.90.550.10:FF:000030">
    <property type="entry name" value="Glucose-1-phosphate adenylyltransferase"/>
    <property type="match status" value="1"/>
</dbReference>
<dbReference type="Gene3D" id="2.160.10.10">
    <property type="entry name" value="Hexapeptide repeat proteins"/>
    <property type="match status" value="1"/>
</dbReference>
<dbReference type="Gene3D" id="3.90.550.10">
    <property type="entry name" value="Spore Coat Polysaccharide Biosynthesis Protein SpsA, Chain A"/>
    <property type="match status" value="1"/>
</dbReference>
<dbReference type="InterPro" id="IPR011831">
    <property type="entry name" value="ADP-Glc_PPase"/>
</dbReference>
<dbReference type="InterPro" id="IPR005836">
    <property type="entry name" value="ADP_Glu_pyroP_CS"/>
</dbReference>
<dbReference type="InterPro" id="IPR005835">
    <property type="entry name" value="NTP_transferase_dom"/>
</dbReference>
<dbReference type="InterPro" id="IPR029044">
    <property type="entry name" value="Nucleotide-diphossugar_trans"/>
</dbReference>
<dbReference type="InterPro" id="IPR011004">
    <property type="entry name" value="Trimer_LpxA-like_sf"/>
</dbReference>
<dbReference type="NCBIfam" id="TIGR02091">
    <property type="entry name" value="glgC"/>
    <property type="match status" value="1"/>
</dbReference>
<dbReference type="NCBIfam" id="NF002772">
    <property type="entry name" value="PRK02862.1"/>
    <property type="match status" value="1"/>
</dbReference>
<dbReference type="PANTHER" id="PTHR43523:SF12">
    <property type="entry name" value="GLUCOSE-1-PHOSPHATE ADENYLYLTRANSFERASE LARGE SUBUNIT 1, CHLOROPLASTIC-RELATED"/>
    <property type="match status" value="1"/>
</dbReference>
<dbReference type="PANTHER" id="PTHR43523">
    <property type="entry name" value="GLUCOSE-1-PHOSPHATE ADENYLYLTRANSFERASE-RELATED"/>
    <property type="match status" value="1"/>
</dbReference>
<dbReference type="Pfam" id="PF25247">
    <property type="entry name" value="LbH_GLGC"/>
    <property type="match status" value="1"/>
</dbReference>
<dbReference type="Pfam" id="PF00483">
    <property type="entry name" value="NTP_transferase"/>
    <property type="match status" value="1"/>
</dbReference>
<dbReference type="SUPFAM" id="SSF53448">
    <property type="entry name" value="Nucleotide-diphospho-sugar transferases"/>
    <property type="match status" value="1"/>
</dbReference>
<dbReference type="SUPFAM" id="SSF51161">
    <property type="entry name" value="Trimeric LpxA-like enzymes"/>
    <property type="match status" value="1"/>
</dbReference>
<dbReference type="PROSITE" id="PS00808">
    <property type="entry name" value="ADP_GLC_PYROPHOSPH_1"/>
    <property type="match status" value="1"/>
</dbReference>
<dbReference type="PROSITE" id="PS00809">
    <property type="entry name" value="ADP_GLC_PYROPHOSPH_2"/>
    <property type="match status" value="1"/>
</dbReference>
<dbReference type="PROSITE" id="PS00810">
    <property type="entry name" value="ADP_GLC_PYROPHOSPH_3"/>
    <property type="match status" value="1"/>
</dbReference>
<gene>
    <name type="primary">AGP-L</name>
    <name type="synonym">AGA.3</name>
</gene>
<sequence>MSSMQFSSVLPLEGKACISPVRREGSASERLKVGDSSSIRHERASRRMCNGGRGPAATGAQCVLTSDASPADTLVLRTSFRRNYADPNEVAAVILGGGTGTQLFPLTSTRATPAVPIGGCYRLIDIPMSNCFNSGINKIFVMTQFNSASLNRHIHRTYLGGGINFTDGSVEVLAATQMPGEAAGWFRGTADAVRKFIWVLEDYYKNKSIEHILILSGDQLYRMDYMELVQKHVDDNADITLSCAPVGESRASEYGLVKFDSSGRVVQFSEKPKGDDLEAMKVDTSFLNFAIDDPAKYPYIASMGVYVFKRDVLLNLLKSRYAELHDFGSEILPRALHDHNVQAYVFTDYWEDIGTIRSFFDANMALCEQPPKFEFYDPKTPFFTSPRYLPPTKSDKCRIKEAIISHGCFLRECKIEHSIIGVRSRLNSGSELKNAMMMGADSYETEDEISRLMSEGKVPIGVGENTKISNCIIDMNARIGRDVVISNKEGVQEADRPEEGYYIRSGIVVIQKNATIKDGTVV</sequence>
<evidence type="ECO:0000255" key="1"/>
<evidence type="ECO:0000256" key="2">
    <source>
        <dbReference type="SAM" id="MobiDB-lite"/>
    </source>
</evidence>
<evidence type="ECO:0000305" key="3"/>
<comment type="function">
    <text>This protein plays a role in synthesis of starch. It catalyzes the synthesis of the activated glycosyl donor, ADP-glucose from Glc-1-P and ATP.</text>
</comment>
<comment type="catalytic activity">
    <reaction>
        <text>alpha-D-glucose 1-phosphate + ATP + H(+) = ADP-alpha-D-glucose + diphosphate</text>
        <dbReference type="Rhea" id="RHEA:12120"/>
        <dbReference type="ChEBI" id="CHEBI:15378"/>
        <dbReference type="ChEBI" id="CHEBI:30616"/>
        <dbReference type="ChEBI" id="CHEBI:33019"/>
        <dbReference type="ChEBI" id="CHEBI:57498"/>
        <dbReference type="ChEBI" id="CHEBI:58601"/>
        <dbReference type="EC" id="2.7.7.27"/>
    </reaction>
</comment>
<comment type="activity regulation">
    <text>Insensitive to 3'phosphoglycerate and orthophosphate.</text>
</comment>
<comment type="pathway">
    <text>Glycan biosynthesis; starch biosynthesis.</text>
</comment>
<comment type="subunit">
    <text>Heterotetramer.</text>
</comment>
<comment type="subcellular location">
    <subcellularLocation>
        <location>Plastid</location>
        <location>Chloroplast</location>
    </subcellularLocation>
    <subcellularLocation>
        <location>Plastid</location>
        <location>Amyloplast</location>
    </subcellularLocation>
    <text>Found in the chloroplast in leaf. Found in the plastid in the developing endosperm.</text>
</comment>
<comment type="tissue specificity">
    <text>Abundantly expressed in the whole grains, a slightly less abundant expression is seen in leaves, while a low level expression is seen in the roots. A greater expression is seen in the endosperm than in the embryo and pericarp layers.</text>
</comment>
<comment type="developmental stage">
    <text>Is not expressed until 10 dpa (days post anthesis), accumulates to the highest levels between 20 and 35 dpa and levels decrease after 35 dpa.</text>
</comment>
<comment type="similarity">
    <text evidence="3">Belongs to the bacterial/plant glucose-1-phosphate adenylyltransferase family.</text>
</comment>
<comment type="caution">
    <text evidence="3">It is uncertain whether Met-1 or Met-4 is the initiator.</text>
</comment>
<accession>P12299</accession>
<feature type="transit peptide" description="Chloroplast" evidence="1">
    <location>
        <begin position="1"/>
        <end position="62"/>
    </location>
</feature>
<feature type="chain" id="PRO_0000011169" description="Glucose-1-phosphate adenylyltransferase large subunit, chloroplastic/amyloplastic">
    <location>
        <begin position="63"/>
        <end position="522"/>
    </location>
</feature>
<feature type="region of interest" description="Disordered" evidence="2">
    <location>
        <begin position="28"/>
        <end position="54"/>
    </location>
</feature>
<feature type="compositionally biased region" description="Basic and acidic residues" evidence="2">
    <location>
        <begin position="28"/>
        <end position="42"/>
    </location>
</feature>
<feature type="sequence conflict" description="In Ref. 2; CAA32532." evidence="3" ref="2">
    <original>A</original>
    <variation>S</variation>
    <location>
        <position position="365"/>
    </location>
</feature>
<feature type="sequence conflict" description="In Ref. 2; CAA32532." evidence="3" ref="2">
    <original>S</original>
    <variation>L</variation>
    <location>
        <position position="405"/>
    </location>
</feature>
<feature type="sequence conflict" description="In Ref. 2; CAA32532." evidence="3" ref="2">
    <original>R</original>
    <variation>P</variation>
    <location>
        <position position="423"/>
    </location>
</feature>